<gene>
    <name evidence="1" type="primary">mtnA</name>
    <name type="ordered locus">THA_488</name>
</gene>
<name>MTNA_THEAB</name>
<proteinExistence type="inferred from homology"/>
<dbReference type="EC" id="5.3.1.23" evidence="1"/>
<dbReference type="EMBL" id="CP001185">
    <property type="protein sequence ID" value="ACJ74979.1"/>
    <property type="molecule type" value="Genomic_DNA"/>
</dbReference>
<dbReference type="RefSeq" id="WP_012579614.1">
    <property type="nucleotide sequence ID" value="NC_011653.1"/>
</dbReference>
<dbReference type="SMR" id="B7IFW5"/>
<dbReference type="STRING" id="484019.THA_488"/>
<dbReference type="KEGG" id="taf:THA_488"/>
<dbReference type="eggNOG" id="COG0182">
    <property type="taxonomic scope" value="Bacteria"/>
</dbReference>
<dbReference type="HOGENOM" id="CLU_016218_1_2_0"/>
<dbReference type="OrthoDB" id="9803436at2"/>
<dbReference type="UniPathway" id="UPA00904">
    <property type="reaction ID" value="UER00874"/>
</dbReference>
<dbReference type="Proteomes" id="UP000002453">
    <property type="component" value="Chromosome"/>
</dbReference>
<dbReference type="GO" id="GO:0046523">
    <property type="term" value="F:S-methyl-5-thioribose-1-phosphate isomerase activity"/>
    <property type="evidence" value="ECO:0007669"/>
    <property type="project" value="UniProtKB-UniRule"/>
</dbReference>
<dbReference type="GO" id="GO:0019509">
    <property type="term" value="P:L-methionine salvage from methylthioadenosine"/>
    <property type="evidence" value="ECO:0007669"/>
    <property type="project" value="UniProtKB-UniRule"/>
</dbReference>
<dbReference type="FunFam" id="1.20.120.420:FF:000003">
    <property type="entry name" value="Methylthioribose-1-phosphate isomerase"/>
    <property type="match status" value="1"/>
</dbReference>
<dbReference type="FunFam" id="3.40.50.10470:FF:000010">
    <property type="entry name" value="Methylthioribose-1-phosphate isomerase"/>
    <property type="match status" value="1"/>
</dbReference>
<dbReference type="Gene3D" id="1.20.120.420">
    <property type="entry name" value="translation initiation factor eif-2b, domain 1"/>
    <property type="match status" value="1"/>
</dbReference>
<dbReference type="Gene3D" id="3.40.50.10470">
    <property type="entry name" value="Translation initiation factor eif-2b, domain 2"/>
    <property type="match status" value="1"/>
</dbReference>
<dbReference type="HAMAP" id="MF_01678">
    <property type="entry name" value="Salvage_MtnA"/>
    <property type="match status" value="1"/>
</dbReference>
<dbReference type="InterPro" id="IPR000649">
    <property type="entry name" value="IF-2B-related"/>
</dbReference>
<dbReference type="InterPro" id="IPR005251">
    <property type="entry name" value="IF-M1Pi"/>
</dbReference>
<dbReference type="InterPro" id="IPR042529">
    <property type="entry name" value="IF_2B-like_C"/>
</dbReference>
<dbReference type="InterPro" id="IPR011559">
    <property type="entry name" value="Initiation_fac_2B_a/b/d"/>
</dbReference>
<dbReference type="InterPro" id="IPR027363">
    <property type="entry name" value="M1Pi_N"/>
</dbReference>
<dbReference type="InterPro" id="IPR037171">
    <property type="entry name" value="NagB/RpiA_transferase-like"/>
</dbReference>
<dbReference type="NCBIfam" id="TIGR00524">
    <property type="entry name" value="eIF-2B_rel"/>
    <property type="match status" value="1"/>
</dbReference>
<dbReference type="NCBIfam" id="NF004326">
    <property type="entry name" value="PRK05720.1"/>
    <property type="match status" value="1"/>
</dbReference>
<dbReference type="NCBIfam" id="TIGR00512">
    <property type="entry name" value="salvage_mtnA"/>
    <property type="match status" value="1"/>
</dbReference>
<dbReference type="PANTHER" id="PTHR43475">
    <property type="entry name" value="METHYLTHIORIBOSE-1-PHOSPHATE ISOMERASE"/>
    <property type="match status" value="1"/>
</dbReference>
<dbReference type="PANTHER" id="PTHR43475:SF1">
    <property type="entry name" value="METHYLTHIORIBOSE-1-PHOSPHATE ISOMERASE"/>
    <property type="match status" value="1"/>
</dbReference>
<dbReference type="Pfam" id="PF01008">
    <property type="entry name" value="IF-2B"/>
    <property type="match status" value="1"/>
</dbReference>
<dbReference type="SUPFAM" id="SSF100950">
    <property type="entry name" value="NagB/RpiA/CoA transferase-like"/>
    <property type="match status" value="1"/>
</dbReference>
<evidence type="ECO:0000255" key="1">
    <source>
        <dbReference type="HAMAP-Rule" id="MF_01678"/>
    </source>
</evidence>
<evidence type="ECO:0000305" key="2"/>
<accession>B7IFW5</accession>
<comment type="function">
    <text evidence="1">Catalyzes the interconversion of methylthioribose-1-phosphate (MTR-1-P) into methylthioribulose-1-phosphate (MTRu-1-P).</text>
</comment>
<comment type="catalytic activity">
    <reaction evidence="1">
        <text>5-(methylsulfanyl)-alpha-D-ribose 1-phosphate = 5-(methylsulfanyl)-D-ribulose 1-phosphate</text>
        <dbReference type="Rhea" id="RHEA:19989"/>
        <dbReference type="ChEBI" id="CHEBI:58533"/>
        <dbReference type="ChEBI" id="CHEBI:58548"/>
        <dbReference type="EC" id="5.3.1.23"/>
    </reaction>
</comment>
<comment type="pathway">
    <text evidence="1">Amino-acid biosynthesis; L-methionine biosynthesis via salvage pathway; L-methionine from S-methyl-5-thio-alpha-D-ribose 1-phosphate: step 1/6.</text>
</comment>
<comment type="similarity">
    <text evidence="2">Belongs to the eIF-2B alpha/beta/delta subunits family. MtnA subfamily.</text>
</comment>
<organism>
    <name type="scientific">Thermosipho africanus (strain TCF52B)</name>
    <dbReference type="NCBI Taxonomy" id="484019"/>
    <lineage>
        <taxon>Bacteria</taxon>
        <taxon>Thermotogati</taxon>
        <taxon>Thermotogota</taxon>
        <taxon>Thermotogae</taxon>
        <taxon>Thermotogales</taxon>
        <taxon>Fervidobacteriaceae</taxon>
        <taxon>Thermosipho</taxon>
    </lineage>
</organism>
<sequence length="346" mass="38047">MKLKTMTMEWTGDELILIDQRKIPLVEEYVSCKSYKEVAVAIKDMVVRGAPAIGASAAFGYVLGAREMFVEDFNAFVKKMEEVKEVLANTRPTAVNLFWALNRMEDSLKKYGKIEGILEYLEEEAMNIAKEDIEVNKAIGRYGAELLKDGDTVLTHCNAGALATVDYGTALGVIRAAVEQGKKIKVFADETRPYLQGARLTAWELMKDGIDVTLISDNMSGWSMKLGKINAVIVGADRVAANGDVANKIGTYMVAVLAKRHGIPFYVAAPTSTIDLNTKTGKDIPIEERKHTEVTHCGGKQIAPDGVKVFNPAFDVTDAELVTAIITEKGVVYPPYEENLKKLFEE</sequence>
<feature type="chain" id="PRO_1000187369" description="Methylthioribose-1-phosphate isomerase">
    <location>
        <begin position="1"/>
        <end position="346"/>
    </location>
</feature>
<feature type="active site" description="Proton donor" evidence="1">
    <location>
        <position position="237"/>
    </location>
</feature>
<feature type="binding site" evidence="1">
    <location>
        <begin position="48"/>
        <end position="50"/>
    </location>
    <ligand>
        <name>substrate</name>
    </ligand>
</feature>
<feature type="binding site" evidence="1">
    <location>
        <position position="91"/>
    </location>
    <ligand>
        <name>substrate</name>
    </ligand>
</feature>
<feature type="binding site" evidence="1">
    <location>
        <position position="196"/>
    </location>
    <ligand>
        <name>substrate</name>
    </ligand>
</feature>
<feature type="binding site" evidence="1">
    <location>
        <begin position="247"/>
        <end position="248"/>
    </location>
    <ligand>
        <name>substrate</name>
    </ligand>
</feature>
<feature type="site" description="Transition state stabilizer" evidence="1">
    <location>
        <position position="157"/>
    </location>
</feature>
<keyword id="KW-0028">Amino-acid biosynthesis</keyword>
<keyword id="KW-0413">Isomerase</keyword>
<keyword id="KW-0486">Methionine biosynthesis</keyword>
<keyword id="KW-1185">Reference proteome</keyword>
<protein>
    <recommendedName>
        <fullName evidence="1">Methylthioribose-1-phosphate isomerase</fullName>
        <shortName evidence="1">M1Pi</shortName>
        <shortName evidence="1">MTR-1-P isomerase</shortName>
        <ecNumber evidence="1">5.3.1.23</ecNumber>
    </recommendedName>
    <alternativeName>
        <fullName evidence="1">S-methyl-5-thioribose-1-phosphate isomerase</fullName>
    </alternativeName>
</protein>
<reference key="1">
    <citation type="journal article" date="2009" name="J. Bacteriol.">
        <title>The genome of Thermosipho africanus TCF52B: lateral genetic connections to the Firmicutes and Archaea.</title>
        <authorList>
            <person name="Nesboe C.L."/>
            <person name="Bapteste E."/>
            <person name="Curtis B."/>
            <person name="Dahle H."/>
            <person name="Lopez P."/>
            <person name="Macleod D."/>
            <person name="Dlutek M."/>
            <person name="Bowman S."/>
            <person name="Zhaxybayeva O."/>
            <person name="Birkeland N.-K."/>
            <person name="Doolittle W.F."/>
        </authorList>
    </citation>
    <scope>NUCLEOTIDE SEQUENCE [LARGE SCALE GENOMIC DNA]</scope>
    <source>
        <strain>TCF52B</strain>
    </source>
</reference>